<sequence length="121" mass="13709">MARIAGVDVPREKRIVISLTYIYGIGKQTAKEVLAEAGVSEDTRTRDLTEEELGKIREILDRIKVEGDLRREVNLNIKRLIEIGSYRGMRHRRGLPVRGQNTKNNARTRKGPSKTVAGKKK</sequence>
<reference key="1">
    <citation type="journal article" date="2004" name="Nucleic Acids Res.">
        <title>Whole genome comparisons of serotype 4b and 1/2a strains of the food-borne pathogen Listeria monocytogenes reveal new insights into the core genome components of this species.</title>
        <authorList>
            <person name="Nelson K.E."/>
            <person name="Fouts D.E."/>
            <person name="Mongodin E.F."/>
            <person name="Ravel J."/>
            <person name="DeBoy R.T."/>
            <person name="Kolonay J.F."/>
            <person name="Rasko D.A."/>
            <person name="Angiuoli S.V."/>
            <person name="Gill S.R."/>
            <person name="Paulsen I.T."/>
            <person name="Peterson J.D."/>
            <person name="White O."/>
            <person name="Nelson W.C."/>
            <person name="Nierman W.C."/>
            <person name="Beanan M.J."/>
            <person name="Brinkac L.M."/>
            <person name="Daugherty S.C."/>
            <person name="Dodson R.J."/>
            <person name="Durkin A.S."/>
            <person name="Madupu R."/>
            <person name="Haft D.H."/>
            <person name="Selengut J."/>
            <person name="Van Aken S.E."/>
            <person name="Khouri H.M."/>
            <person name="Fedorova N."/>
            <person name="Forberger H.A."/>
            <person name="Tran B."/>
            <person name="Kathariou S."/>
            <person name="Wonderling L.D."/>
            <person name="Uhlich G.A."/>
            <person name="Bayles D.O."/>
            <person name="Luchansky J.B."/>
            <person name="Fraser C.M."/>
        </authorList>
    </citation>
    <scope>NUCLEOTIDE SEQUENCE [LARGE SCALE GENOMIC DNA]</scope>
    <source>
        <strain>F2365</strain>
    </source>
</reference>
<proteinExistence type="inferred from homology"/>
<evidence type="ECO:0000255" key="1">
    <source>
        <dbReference type="HAMAP-Rule" id="MF_01315"/>
    </source>
</evidence>
<evidence type="ECO:0000256" key="2">
    <source>
        <dbReference type="SAM" id="MobiDB-lite"/>
    </source>
</evidence>
<evidence type="ECO:0000305" key="3"/>
<dbReference type="EMBL" id="AE017262">
    <property type="protein sequence ID" value="AAT05346.1"/>
    <property type="molecule type" value="Genomic_DNA"/>
</dbReference>
<dbReference type="RefSeq" id="WP_003723677.1">
    <property type="nucleotide sequence ID" value="NC_002973.6"/>
</dbReference>
<dbReference type="SMR" id="Q71WH0"/>
<dbReference type="GeneID" id="93240489"/>
<dbReference type="KEGG" id="lmf:LMOf2365_2581"/>
<dbReference type="HOGENOM" id="CLU_103849_1_1_9"/>
<dbReference type="GO" id="GO:0005829">
    <property type="term" value="C:cytosol"/>
    <property type="evidence" value="ECO:0007669"/>
    <property type="project" value="TreeGrafter"/>
</dbReference>
<dbReference type="GO" id="GO:0015935">
    <property type="term" value="C:small ribosomal subunit"/>
    <property type="evidence" value="ECO:0007669"/>
    <property type="project" value="TreeGrafter"/>
</dbReference>
<dbReference type="GO" id="GO:0019843">
    <property type="term" value="F:rRNA binding"/>
    <property type="evidence" value="ECO:0007669"/>
    <property type="project" value="UniProtKB-UniRule"/>
</dbReference>
<dbReference type="GO" id="GO:0003735">
    <property type="term" value="F:structural constituent of ribosome"/>
    <property type="evidence" value="ECO:0007669"/>
    <property type="project" value="InterPro"/>
</dbReference>
<dbReference type="GO" id="GO:0000049">
    <property type="term" value="F:tRNA binding"/>
    <property type="evidence" value="ECO:0007669"/>
    <property type="project" value="UniProtKB-UniRule"/>
</dbReference>
<dbReference type="GO" id="GO:0006412">
    <property type="term" value="P:translation"/>
    <property type="evidence" value="ECO:0007669"/>
    <property type="project" value="UniProtKB-UniRule"/>
</dbReference>
<dbReference type="FunFam" id="1.10.8.50:FF:000001">
    <property type="entry name" value="30S ribosomal protein S13"/>
    <property type="match status" value="1"/>
</dbReference>
<dbReference type="FunFam" id="4.10.910.10:FF:000001">
    <property type="entry name" value="30S ribosomal protein S13"/>
    <property type="match status" value="1"/>
</dbReference>
<dbReference type="Gene3D" id="1.10.8.50">
    <property type="match status" value="1"/>
</dbReference>
<dbReference type="Gene3D" id="4.10.910.10">
    <property type="entry name" value="30s ribosomal protein s13, domain 2"/>
    <property type="match status" value="1"/>
</dbReference>
<dbReference type="HAMAP" id="MF_01315">
    <property type="entry name" value="Ribosomal_uS13"/>
    <property type="match status" value="1"/>
</dbReference>
<dbReference type="InterPro" id="IPR027437">
    <property type="entry name" value="Rbsml_uS13_C"/>
</dbReference>
<dbReference type="InterPro" id="IPR001892">
    <property type="entry name" value="Ribosomal_uS13"/>
</dbReference>
<dbReference type="InterPro" id="IPR010979">
    <property type="entry name" value="Ribosomal_uS13-like_H2TH"/>
</dbReference>
<dbReference type="InterPro" id="IPR019980">
    <property type="entry name" value="Ribosomal_uS13_bac-type"/>
</dbReference>
<dbReference type="InterPro" id="IPR018269">
    <property type="entry name" value="Ribosomal_uS13_CS"/>
</dbReference>
<dbReference type="NCBIfam" id="TIGR03631">
    <property type="entry name" value="uS13_bact"/>
    <property type="match status" value="1"/>
</dbReference>
<dbReference type="PANTHER" id="PTHR10871">
    <property type="entry name" value="30S RIBOSOMAL PROTEIN S13/40S RIBOSOMAL PROTEIN S18"/>
    <property type="match status" value="1"/>
</dbReference>
<dbReference type="PANTHER" id="PTHR10871:SF1">
    <property type="entry name" value="SMALL RIBOSOMAL SUBUNIT PROTEIN US13M"/>
    <property type="match status" value="1"/>
</dbReference>
<dbReference type="Pfam" id="PF00416">
    <property type="entry name" value="Ribosomal_S13"/>
    <property type="match status" value="1"/>
</dbReference>
<dbReference type="PIRSF" id="PIRSF002134">
    <property type="entry name" value="Ribosomal_S13"/>
    <property type="match status" value="1"/>
</dbReference>
<dbReference type="SUPFAM" id="SSF46946">
    <property type="entry name" value="S13-like H2TH domain"/>
    <property type="match status" value="1"/>
</dbReference>
<dbReference type="PROSITE" id="PS00646">
    <property type="entry name" value="RIBOSOMAL_S13_1"/>
    <property type="match status" value="1"/>
</dbReference>
<dbReference type="PROSITE" id="PS50159">
    <property type="entry name" value="RIBOSOMAL_S13_2"/>
    <property type="match status" value="1"/>
</dbReference>
<gene>
    <name evidence="1" type="primary">rpsM</name>
    <name type="ordered locus">LMOf2365_2581</name>
</gene>
<protein>
    <recommendedName>
        <fullName evidence="1">Small ribosomal subunit protein uS13</fullName>
    </recommendedName>
    <alternativeName>
        <fullName evidence="3">30S ribosomal protein S13</fullName>
    </alternativeName>
</protein>
<name>RS13_LISMF</name>
<organism>
    <name type="scientific">Listeria monocytogenes serotype 4b (strain F2365)</name>
    <dbReference type="NCBI Taxonomy" id="265669"/>
    <lineage>
        <taxon>Bacteria</taxon>
        <taxon>Bacillati</taxon>
        <taxon>Bacillota</taxon>
        <taxon>Bacilli</taxon>
        <taxon>Bacillales</taxon>
        <taxon>Listeriaceae</taxon>
        <taxon>Listeria</taxon>
    </lineage>
</organism>
<accession>Q71WH0</accession>
<comment type="function">
    <text evidence="1">Located at the top of the head of the 30S subunit, it contacts several helices of the 16S rRNA. In the 70S ribosome it contacts the 23S rRNA (bridge B1a) and protein L5 of the 50S subunit (bridge B1b), connecting the 2 subunits; these bridges are implicated in subunit movement. Contacts the tRNAs in the A and P-sites.</text>
</comment>
<comment type="subunit">
    <text evidence="1">Part of the 30S ribosomal subunit. Forms a loose heterodimer with protein S19. Forms two bridges to the 50S subunit in the 70S ribosome.</text>
</comment>
<comment type="similarity">
    <text evidence="1">Belongs to the universal ribosomal protein uS13 family.</text>
</comment>
<feature type="chain" id="PRO_0000132104" description="Small ribosomal subunit protein uS13">
    <location>
        <begin position="1"/>
        <end position="121"/>
    </location>
</feature>
<feature type="region of interest" description="Disordered" evidence="2">
    <location>
        <begin position="91"/>
        <end position="121"/>
    </location>
</feature>
<feature type="compositionally biased region" description="Basic residues" evidence="2">
    <location>
        <begin position="106"/>
        <end position="121"/>
    </location>
</feature>
<keyword id="KW-0687">Ribonucleoprotein</keyword>
<keyword id="KW-0689">Ribosomal protein</keyword>
<keyword id="KW-0694">RNA-binding</keyword>
<keyword id="KW-0699">rRNA-binding</keyword>
<keyword id="KW-0820">tRNA-binding</keyword>